<reference key="1">
    <citation type="journal article" date="1999" name="J. Mol. Evol.">
        <title>Phylogenetic studies of complete mitochondrial DNA molecules place cartilaginous fishes within the tree of bony fishes.</title>
        <authorList>
            <person name="Rasmussen A.S."/>
            <person name="Arnason U."/>
        </authorList>
    </citation>
    <scope>NUCLEOTIDE SEQUENCE [GENOMIC DNA]</scope>
</reference>
<protein>
    <recommendedName>
        <fullName>Cytochrome c oxidase subunit 1</fullName>
        <ecNumber>7.1.1.9</ecNumber>
    </recommendedName>
    <alternativeName>
        <fullName>Cytochrome c oxidase polypeptide I</fullName>
    </alternativeName>
</protein>
<dbReference type="EC" id="7.1.1.9"/>
<dbReference type="EMBL" id="Y18134">
    <property type="protein sequence ID" value="CAA77051.1"/>
    <property type="molecule type" value="Genomic_DNA"/>
</dbReference>
<dbReference type="PIR" id="T11536">
    <property type="entry name" value="T11536"/>
</dbReference>
<dbReference type="SMR" id="Q9ZZ52"/>
<dbReference type="CTD" id="4512"/>
<dbReference type="UniPathway" id="UPA00705"/>
<dbReference type="GO" id="GO:0005743">
    <property type="term" value="C:mitochondrial inner membrane"/>
    <property type="evidence" value="ECO:0007669"/>
    <property type="project" value="UniProtKB-SubCell"/>
</dbReference>
<dbReference type="GO" id="GO:0045277">
    <property type="term" value="C:respiratory chain complex IV"/>
    <property type="evidence" value="ECO:0000250"/>
    <property type="project" value="UniProtKB"/>
</dbReference>
<dbReference type="GO" id="GO:0004129">
    <property type="term" value="F:cytochrome-c oxidase activity"/>
    <property type="evidence" value="ECO:0007669"/>
    <property type="project" value="UniProtKB-EC"/>
</dbReference>
<dbReference type="GO" id="GO:0020037">
    <property type="term" value="F:heme binding"/>
    <property type="evidence" value="ECO:0007669"/>
    <property type="project" value="InterPro"/>
</dbReference>
<dbReference type="GO" id="GO:0046872">
    <property type="term" value="F:metal ion binding"/>
    <property type="evidence" value="ECO:0007669"/>
    <property type="project" value="UniProtKB-KW"/>
</dbReference>
<dbReference type="GO" id="GO:0015990">
    <property type="term" value="P:electron transport coupled proton transport"/>
    <property type="evidence" value="ECO:0007669"/>
    <property type="project" value="TreeGrafter"/>
</dbReference>
<dbReference type="GO" id="GO:0006123">
    <property type="term" value="P:mitochondrial electron transport, cytochrome c to oxygen"/>
    <property type="evidence" value="ECO:0007669"/>
    <property type="project" value="TreeGrafter"/>
</dbReference>
<dbReference type="CDD" id="cd01663">
    <property type="entry name" value="Cyt_c_Oxidase_I"/>
    <property type="match status" value="1"/>
</dbReference>
<dbReference type="FunFam" id="1.20.210.10:FF:000001">
    <property type="entry name" value="Cytochrome c oxidase subunit 1"/>
    <property type="match status" value="1"/>
</dbReference>
<dbReference type="Gene3D" id="1.20.210.10">
    <property type="entry name" value="Cytochrome c oxidase-like, subunit I domain"/>
    <property type="match status" value="1"/>
</dbReference>
<dbReference type="InterPro" id="IPR023616">
    <property type="entry name" value="Cyt_c_oxase-like_su1_dom"/>
</dbReference>
<dbReference type="InterPro" id="IPR036927">
    <property type="entry name" value="Cyt_c_oxase-like_su1_sf"/>
</dbReference>
<dbReference type="InterPro" id="IPR000883">
    <property type="entry name" value="Cyt_C_Oxase_1"/>
</dbReference>
<dbReference type="InterPro" id="IPR023615">
    <property type="entry name" value="Cyt_c_Oxase_su1_BS"/>
</dbReference>
<dbReference type="InterPro" id="IPR033944">
    <property type="entry name" value="Cyt_c_oxase_su1_dom"/>
</dbReference>
<dbReference type="PANTHER" id="PTHR10422">
    <property type="entry name" value="CYTOCHROME C OXIDASE SUBUNIT 1"/>
    <property type="match status" value="1"/>
</dbReference>
<dbReference type="PANTHER" id="PTHR10422:SF18">
    <property type="entry name" value="CYTOCHROME C OXIDASE SUBUNIT 1"/>
    <property type="match status" value="1"/>
</dbReference>
<dbReference type="Pfam" id="PF00115">
    <property type="entry name" value="COX1"/>
    <property type="match status" value="1"/>
</dbReference>
<dbReference type="PRINTS" id="PR01165">
    <property type="entry name" value="CYCOXIDASEI"/>
</dbReference>
<dbReference type="SUPFAM" id="SSF81442">
    <property type="entry name" value="Cytochrome c oxidase subunit I-like"/>
    <property type="match status" value="1"/>
</dbReference>
<dbReference type="PROSITE" id="PS50855">
    <property type="entry name" value="COX1"/>
    <property type="match status" value="1"/>
</dbReference>
<dbReference type="PROSITE" id="PS00077">
    <property type="entry name" value="COX1_CUB"/>
    <property type="match status" value="1"/>
</dbReference>
<sequence>MAINRWFFSTNHKDIGTLYLIFGAWAGMVGTALSLLIRAELSQPGTLLGDDQIYNVIVTAHAFVMIFFMVMPVMIGGFGNWLVPLMIGAPDMAFPRMNNMSFWLLPPSLLLLLASAGVEAGAGTGWTVYPPLAGNMAHAGASVDLAIFSLHLAGISSILASINFITTIINMKPPAISQYQTPLFVWSILVTTILLLLSLPVLAAAITMLLTDRNLNTTFFDPAGGGDPILYQHLFWFFGHPEVYILILPGFGMISHVVAYYSGKKEPFGYMGMVWAMMAIGLLGFIVWAHHMFTVGMDVDTRAYFTSATMIIAIPTGVKVFSWLATLHGGSIKWETPLLWALGFIFLFTVGGLTGIVLANSSLDIVLHDTYYVVAHFHYVLSMGAVFAIMAGFIHWFPLFSGYTLHSTWTKTQFLVMFIGVNLTFFPQHFLGLAGMPRRYSDYPDAYALWNTVSSIGSLISLVAVIMFLFIIWEAFAPSGKVLSVELPHTNVEWLHGCPPPYHTYEEPAFVQVQRTYF</sequence>
<accession>Q9ZZ52</accession>
<keyword id="KW-0106">Calcium</keyword>
<keyword id="KW-0186">Copper</keyword>
<keyword id="KW-0249">Electron transport</keyword>
<keyword id="KW-0349">Heme</keyword>
<keyword id="KW-0408">Iron</keyword>
<keyword id="KW-0460">Magnesium</keyword>
<keyword id="KW-0472">Membrane</keyword>
<keyword id="KW-0479">Metal-binding</keyword>
<keyword id="KW-0496">Mitochondrion</keyword>
<keyword id="KW-0999">Mitochondrion inner membrane</keyword>
<keyword id="KW-0679">Respiratory chain</keyword>
<keyword id="KW-0915">Sodium</keyword>
<keyword id="KW-1278">Translocase</keyword>
<keyword id="KW-0812">Transmembrane</keyword>
<keyword id="KW-1133">Transmembrane helix</keyword>
<keyword id="KW-0813">Transport</keyword>
<proteinExistence type="inferred from homology"/>
<organism>
    <name type="scientific">Squalus acanthias</name>
    <name type="common">Spiny dogfish</name>
    <dbReference type="NCBI Taxonomy" id="7797"/>
    <lineage>
        <taxon>Eukaryota</taxon>
        <taxon>Metazoa</taxon>
        <taxon>Chordata</taxon>
        <taxon>Craniata</taxon>
        <taxon>Vertebrata</taxon>
        <taxon>Chondrichthyes</taxon>
        <taxon>Elasmobranchii</taxon>
        <taxon>Squalomorphii</taxon>
        <taxon>Squaliformes</taxon>
        <taxon>Squalidae</taxon>
        <taxon>Squalus</taxon>
    </lineage>
</organism>
<comment type="function">
    <text evidence="3">Component of the cytochrome c oxidase, the last enzyme in the mitochondrial electron transport chain which drives oxidative phosphorylation. The respiratory chain contains 3 multisubunit complexes succinate dehydrogenase (complex II, CII), ubiquinol-cytochrome c oxidoreductase (cytochrome b-c1 complex, complex III, CIII) and cytochrome c oxidase (complex IV, CIV), that cooperate to transfer electrons derived from NADH and succinate to molecular oxygen, creating an electrochemical gradient over the inner membrane that drives transmembrane transport and the ATP synthase. Cytochrome c oxidase is the component of the respiratory chain that catalyzes the reduction of oxygen to water. Electrons originating from reduced cytochrome c in the intermembrane space (IMS) are transferred via the dinuclear copper A center (CU(A)) of subunit 2 and heme A of subunit 1 to the active site in subunit 1, a binuclear center (BNC) formed by heme A3 and copper B (CU(B)). The BNC reduces molecular oxygen to 2 water molecules using 4 electrons from cytochrome c in the IMS and 4 protons from the mitochondrial matrix.</text>
</comment>
<comment type="catalytic activity">
    <reaction evidence="3">
        <text>4 Fe(II)-[cytochrome c] + O2 + 8 H(+)(in) = 4 Fe(III)-[cytochrome c] + 2 H2O + 4 H(+)(out)</text>
        <dbReference type="Rhea" id="RHEA:11436"/>
        <dbReference type="Rhea" id="RHEA-COMP:10350"/>
        <dbReference type="Rhea" id="RHEA-COMP:14399"/>
        <dbReference type="ChEBI" id="CHEBI:15377"/>
        <dbReference type="ChEBI" id="CHEBI:15378"/>
        <dbReference type="ChEBI" id="CHEBI:15379"/>
        <dbReference type="ChEBI" id="CHEBI:29033"/>
        <dbReference type="ChEBI" id="CHEBI:29034"/>
        <dbReference type="EC" id="7.1.1.9"/>
    </reaction>
    <physiologicalReaction direction="left-to-right" evidence="3">
        <dbReference type="Rhea" id="RHEA:11437"/>
    </physiologicalReaction>
</comment>
<comment type="cofactor">
    <cofactor evidence="2">
        <name>heme</name>
        <dbReference type="ChEBI" id="CHEBI:30413"/>
    </cofactor>
    <text evidence="2">Binds 2 heme A groups non-covalently per subunit.</text>
</comment>
<comment type="cofactor">
    <cofactor evidence="2">
        <name>Cu cation</name>
        <dbReference type="ChEBI" id="CHEBI:23378"/>
    </cofactor>
    <text evidence="2">Binds a copper B center.</text>
</comment>
<comment type="pathway">
    <text evidence="3">Energy metabolism; oxidative phosphorylation.</text>
</comment>
<comment type="subunit">
    <text evidence="1 2">Component of the cytochrome c oxidase (complex IV, CIV), a multisubunit enzyme composed of 14 subunits. The complex is composed of a catalytic core of 3 subunits MT-CO1, MT-CO2 and MT-CO3, encoded in the mitochondrial DNA, and 11 supernumerary subunits COX4I, COX5A, COX5B, COX6A, COX6B, COX6C, COX7A, COX7B, COX7C, COX8 and NDUFA4, which are encoded in the nuclear genome. The complex exists as a monomer or a dimer and forms supercomplexes (SCs) in the inner mitochondrial membrane with NADH-ubiquinone oxidoreductase (complex I, CI) and ubiquinol-cytochrome c oxidoreductase (cytochrome b-c1 complex, complex III, CIII), resulting in different assemblies (supercomplex SCI(1)III(2)IV(1) and megacomplex MCI(2)III(2)IV(2)) (By similarity). As a newly synthesized protein, rapidly incorporates into a multi-subunit assembly intermediate in the inner membrane, called MITRAC (mitochondrial translation regulation assembly intermediate of cytochrome c oxidase) complex, whose core components are COA3/MITRAC12 and COX14. Within the MITRAC complex, interacts with COA3 and with SMIM20/MITRAC7; the interaction with SMIM20 stabilizes the newly synthesized MT-CO1 and prevents its premature turnover. Interacts with TMEM177 in a COX20-dependent manner (By similarity).</text>
</comment>
<comment type="subcellular location">
    <subcellularLocation>
        <location evidence="2">Mitochondrion inner membrane</location>
        <topology evidence="2">Multi-pass membrane protein</topology>
    </subcellularLocation>
</comment>
<comment type="similarity">
    <text evidence="4">Belongs to the heme-copper respiratory oxidase family.</text>
</comment>
<geneLocation type="mitochondrion"/>
<feature type="chain" id="PRO_0000183421" description="Cytochrome c oxidase subunit 1">
    <location>
        <begin position="1"/>
        <end position="518"/>
    </location>
</feature>
<feature type="topological domain" description="Mitochondrial matrix" evidence="2">
    <location>
        <begin position="1"/>
        <end position="11"/>
    </location>
</feature>
<feature type="transmembrane region" description="Helical; Name=I" evidence="2">
    <location>
        <begin position="12"/>
        <end position="40"/>
    </location>
</feature>
<feature type="topological domain" description="Mitochondrial intermembrane" evidence="2">
    <location>
        <begin position="41"/>
        <end position="50"/>
    </location>
</feature>
<feature type="transmembrane region" description="Helical; Name=II" evidence="2">
    <location>
        <begin position="51"/>
        <end position="86"/>
    </location>
</feature>
<feature type="topological domain" description="Mitochondrial matrix" evidence="2">
    <location>
        <begin position="87"/>
        <end position="94"/>
    </location>
</feature>
<feature type="transmembrane region" description="Helical; Name=III" evidence="2">
    <location>
        <begin position="95"/>
        <end position="117"/>
    </location>
</feature>
<feature type="topological domain" description="Mitochondrial intermembrane" evidence="2">
    <location>
        <begin position="118"/>
        <end position="140"/>
    </location>
</feature>
<feature type="transmembrane region" description="Helical; Name=IV" evidence="2">
    <location>
        <begin position="141"/>
        <end position="170"/>
    </location>
</feature>
<feature type="topological domain" description="Mitochondrial matrix" evidence="2">
    <location>
        <begin position="171"/>
        <end position="182"/>
    </location>
</feature>
<feature type="transmembrane region" description="Helical; Name=V" evidence="2">
    <location>
        <begin position="183"/>
        <end position="212"/>
    </location>
</feature>
<feature type="topological domain" description="Mitochondrial intermembrane" evidence="2">
    <location>
        <begin position="213"/>
        <end position="227"/>
    </location>
</feature>
<feature type="transmembrane region" description="Helical; Name=VI" evidence="2">
    <location>
        <begin position="228"/>
        <end position="261"/>
    </location>
</feature>
<feature type="topological domain" description="Mitochondrial matrix" evidence="2">
    <location>
        <begin position="262"/>
        <end position="269"/>
    </location>
</feature>
<feature type="transmembrane region" description="Helical; Name=VII" evidence="2">
    <location>
        <begin position="270"/>
        <end position="286"/>
    </location>
</feature>
<feature type="topological domain" description="Mitochondrial intermembrane" evidence="2">
    <location>
        <begin position="287"/>
        <end position="298"/>
    </location>
</feature>
<feature type="transmembrane region" description="Helical; Name=VIII" evidence="2">
    <location>
        <begin position="299"/>
        <end position="327"/>
    </location>
</feature>
<feature type="topological domain" description="Mitochondrial matrix" evidence="2">
    <location>
        <begin position="328"/>
        <end position="335"/>
    </location>
</feature>
<feature type="transmembrane region" description="Helical; Name=IX" evidence="2">
    <location>
        <begin position="336"/>
        <end position="357"/>
    </location>
</feature>
<feature type="topological domain" description="Mitochondrial intermembrane" evidence="2">
    <location>
        <begin position="358"/>
        <end position="370"/>
    </location>
</feature>
<feature type="transmembrane region" description="Helical; Name=X" evidence="2">
    <location>
        <begin position="371"/>
        <end position="400"/>
    </location>
</feature>
<feature type="topological domain" description="Mitochondrial matrix" evidence="2">
    <location>
        <begin position="401"/>
        <end position="406"/>
    </location>
</feature>
<feature type="transmembrane region" description="Helical; Name=XI" evidence="2">
    <location>
        <begin position="407"/>
        <end position="433"/>
    </location>
</feature>
<feature type="topological domain" description="Mitochondrial intermembrane" evidence="2">
    <location>
        <begin position="434"/>
        <end position="446"/>
    </location>
</feature>
<feature type="transmembrane region" description="Helical; Name=XII" evidence="2">
    <location>
        <begin position="447"/>
        <end position="478"/>
    </location>
</feature>
<feature type="topological domain" description="Mitochondrial matrix" evidence="2">
    <location>
        <begin position="479"/>
        <end position="518"/>
    </location>
</feature>
<feature type="binding site" evidence="2">
    <location>
        <position position="40"/>
    </location>
    <ligand>
        <name>Na(+)</name>
        <dbReference type="ChEBI" id="CHEBI:29101"/>
    </ligand>
</feature>
<feature type="binding site" evidence="2">
    <location>
        <position position="45"/>
    </location>
    <ligand>
        <name>Na(+)</name>
        <dbReference type="ChEBI" id="CHEBI:29101"/>
    </ligand>
</feature>
<feature type="binding site" description="axial binding residue" evidence="2">
    <location>
        <position position="61"/>
    </location>
    <ligand>
        <name>Fe(II)-heme a</name>
        <dbReference type="ChEBI" id="CHEBI:61715"/>
        <note>low-spin</note>
    </ligand>
    <ligandPart>
        <name>Fe</name>
        <dbReference type="ChEBI" id="CHEBI:18248"/>
    </ligandPart>
</feature>
<feature type="binding site" evidence="2">
    <location>
        <position position="240"/>
    </location>
    <ligand>
        <name>Cu cation</name>
        <dbReference type="ChEBI" id="CHEBI:23378"/>
        <label>B</label>
    </ligand>
</feature>
<feature type="binding site" evidence="2">
    <location>
        <position position="244"/>
    </location>
    <ligand>
        <name>O2</name>
        <dbReference type="ChEBI" id="CHEBI:15379"/>
    </ligand>
</feature>
<feature type="binding site" evidence="2">
    <location>
        <position position="290"/>
    </location>
    <ligand>
        <name>Cu cation</name>
        <dbReference type="ChEBI" id="CHEBI:23378"/>
        <label>B</label>
    </ligand>
</feature>
<feature type="binding site" evidence="2">
    <location>
        <position position="291"/>
    </location>
    <ligand>
        <name>Cu cation</name>
        <dbReference type="ChEBI" id="CHEBI:23378"/>
        <label>B</label>
    </ligand>
</feature>
<feature type="binding site" evidence="2">
    <location>
        <position position="368"/>
    </location>
    <ligand>
        <name>Mg(2+)</name>
        <dbReference type="ChEBI" id="CHEBI:18420"/>
        <note>ligand shared with MT-CO2</note>
    </ligand>
</feature>
<feature type="binding site" evidence="2">
    <location>
        <position position="369"/>
    </location>
    <ligand>
        <name>Mg(2+)</name>
        <dbReference type="ChEBI" id="CHEBI:18420"/>
        <note>ligand shared with MT-CO2</note>
    </ligand>
</feature>
<feature type="binding site" description="axial binding residue" evidence="2">
    <location>
        <position position="376"/>
    </location>
    <ligand>
        <name>heme a3</name>
        <dbReference type="ChEBI" id="CHEBI:83282"/>
        <note>high-spin</note>
    </ligand>
    <ligandPart>
        <name>Fe</name>
        <dbReference type="ChEBI" id="CHEBI:18248"/>
    </ligandPart>
</feature>
<feature type="binding site" description="axial binding residue" evidence="2">
    <location>
        <position position="378"/>
    </location>
    <ligand>
        <name>Fe(II)-heme a</name>
        <dbReference type="ChEBI" id="CHEBI:61715"/>
        <note>low-spin</note>
    </ligand>
    <ligandPart>
        <name>Fe</name>
        <dbReference type="ChEBI" id="CHEBI:18248"/>
    </ligandPart>
</feature>
<feature type="binding site" evidence="2">
    <location>
        <position position="441"/>
    </location>
    <ligand>
        <name>Na(+)</name>
        <dbReference type="ChEBI" id="CHEBI:29101"/>
    </ligand>
</feature>
<feature type="cross-link" description="1'-histidyl-3'-tyrosine (His-Tyr)" evidence="2">
    <location>
        <begin position="240"/>
        <end position="244"/>
    </location>
</feature>
<gene>
    <name type="primary">MT-CO1</name>
    <name type="synonym">COI</name>
    <name type="synonym">COXI</name>
    <name type="synonym">MTCO1</name>
</gene>
<name>COX1_SQUAC</name>
<evidence type="ECO:0000250" key="1">
    <source>
        <dbReference type="UniProtKB" id="P00395"/>
    </source>
</evidence>
<evidence type="ECO:0000250" key="2">
    <source>
        <dbReference type="UniProtKB" id="P00396"/>
    </source>
</evidence>
<evidence type="ECO:0000250" key="3">
    <source>
        <dbReference type="UniProtKB" id="P00401"/>
    </source>
</evidence>
<evidence type="ECO:0000305" key="4"/>